<accession>A1U5I2</accession>
<name>FETP_MARN8</name>
<proteinExistence type="inferred from homology"/>
<protein>
    <recommendedName>
        <fullName evidence="1">Probable Fe(2+)-trafficking protein</fullName>
    </recommendedName>
</protein>
<comment type="function">
    <text evidence="1">Could be a mediator in iron transactions between iron acquisition and iron-requiring processes, such as synthesis and/or repair of Fe-S clusters in biosynthetic enzymes.</text>
</comment>
<comment type="similarity">
    <text evidence="1">Belongs to the Fe(2+)-trafficking protein family.</text>
</comment>
<organism>
    <name type="scientific">Marinobacter nauticus (strain ATCC 700491 / DSM 11845 / VT8)</name>
    <name type="common">Marinobacter aquaeolei</name>
    <dbReference type="NCBI Taxonomy" id="351348"/>
    <lineage>
        <taxon>Bacteria</taxon>
        <taxon>Pseudomonadati</taxon>
        <taxon>Pseudomonadota</taxon>
        <taxon>Gammaproteobacteria</taxon>
        <taxon>Pseudomonadales</taxon>
        <taxon>Marinobacteraceae</taxon>
        <taxon>Marinobacter</taxon>
    </lineage>
</organism>
<sequence>MSRTVFCRKYQKELEGLAMPPMPGPKGQDIYENVSKLAWEEWQNQQTMLINEKHLNLMDVNNRKYLQAQMERFFNNEPFDQAEGYVPPEK</sequence>
<feature type="chain" id="PRO_1000045045" description="Probable Fe(2+)-trafficking protein">
    <location>
        <begin position="1"/>
        <end position="90"/>
    </location>
</feature>
<dbReference type="EMBL" id="CP000514">
    <property type="protein sequence ID" value="ABM20251.1"/>
    <property type="molecule type" value="Genomic_DNA"/>
</dbReference>
<dbReference type="RefSeq" id="WP_011786619.1">
    <property type="nucleotide sequence ID" value="NC_008740.1"/>
</dbReference>
<dbReference type="SMR" id="A1U5I2"/>
<dbReference type="STRING" id="351348.Maqu_3177"/>
<dbReference type="KEGG" id="maq:Maqu_3177"/>
<dbReference type="eggNOG" id="COG2924">
    <property type="taxonomic scope" value="Bacteria"/>
</dbReference>
<dbReference type="HOGENOM" id="CLU_170994_0_0_6"/>
<dbReference type="OrthoDB" id="9804318at2"/>
<dbReference type="Proteomes" id="UP000000998">
    <property type="component" value="Chromosome"/>
</dbReference>
<dbReference type="GO" id="GO:0005829">
    <property type="term" value="C:cytosol"/>
    <property type="evidence" value="ECO:0007669"/>
    <property type="project" value="TreeGrafter"/>
</dbReference>
<dbReference type="GO" id="GO:0005506">
    <property type="term" value="F:iron ion binding"/>
    <property type="evidence" value="ECO:0007669"/>
    <property type="project" value="UniProtKB-UniRule"/>
</dbReference>
<dbReference type="GO" id="GO:0034599">
    <property type="term" value="P:cellular response to oxidative stress"/>
    <property type="evidence" value="ECO:0007669"/>
    <property type="project" value="TreeGrafter"/>
</dbReference>
<dbReference type="FunFam" id="1.10.3880.10:FF:000001">
    <property type="entry name" value="Probable Fe(2+)-trafficking protein"/>
    <property type="match status" value="1"/>
</dbReference>
<dbReference type="Gene3D" id="1.10.3880.10">
    <property type="entry name" value="Fe(II) trafficking protein YggX"/>
    <property type="match status" value="1"/>
</dbReference>
<dbReference type="HAMAP" id="MF_00686">
    <property type="entry name" value="Fe_traffic_YggX"/>
    <property type="match status" value="1"/>
</dbReference>
<dbReference type="InterPro" id="IPR007457">
    <property type="entry name" value="Fe_traffick_prot_YggX"/>
</dbReference>
<dbReference type="InterPro" id="IPR036766">
    <property type="entry name" value="Fe_traffick_prot_YggX_sf"/>
</dbReference>
<dbReference type="NCBIfam" id="NF003817">
    <property type="entry name" value="PRK05408.1"/>
    <property type="match status" value="1"/>
</dbReference>
<dbReference type="PANTHER" id="PTHR36965">
    <property type="entry name" value="FE(2+)-TRAFFICKING PROTEIN-RELATED"/>
    <property type="match status" value="1"/>
</dbReference>
<dbReference type="PANTHER" id="PTHR36965:SF1">
    <property type="entry name" value="FE(2+)-TRAFFICKING PROTEIN-RELATED"/>
    <property type="match status" value="1"/>
</dbReference>
<dbReference type="Pfam" id="PF04362">
    <property type="entry name" value="Iron_traffic"/>
    <property type="match status" value="1"/>
</dbReference>
<dbReference type="PIRSF" id="PIRSF029827">
    <property type="entry name" value="Fe_traffic_YggX"/>
    <property type="match status" value="1"/>
</dbReference>
<dbReference type="SUPFAM" id="SSF111148">
    <property type="entry name" value="YggX-like"/>
    <property type="match status" value="1"/>
</dbReference>
<keyword id="KW-0408">Iron</keyword>
<evidence type="ECO:0000255" key="1">
    <source>
        <dbReference type="HAMAP-Rule" id="MF_00686"/>
    </source>
</evidence>
<reference key="1">
    <citation type="journal article" date="2011" name="Appl. Environ. Microbiol.">
        <title>Genomic potential of Marinobacter aquaeolei, a biogeochemical 'opportunitroph'.</title>
        <authorList>
            <person name="Singer E."/>
            <person name="Webb E.A."/>
            <person name="Nelson W.C."/>
            <person name="Heidelberg J.F."/>
            <person name="Ivanova N."/>
            <person name="Pati A."/>
            <person name="Edwards K.J."/>
        </authorList>
    </citation>
    <scope>NUCLEOTIDE SEQUENCE [LARGE SCALE GENOMIC DNA]</scope>
    <source>
        <strain>ATCC 700491 / DSM 11845 / VT8</strain>
    </source>
</reference>
<gene>
    <name type="ordered locus">Maqu_3177</name>
</gene>